<organism>
    <name type="scientific">Escherichia coli (strain SE11)</name>
    <dbReference type="NCBI Taxonomy" id="409438"/>
    <lineage>
        <taxon>Bacteria</taxon>
        <taxon>Pseudomonadati</taxon>
        <taxon>Pseudomonadota</taxon>
        <taxon>Gammaproteobacteria</taxon>
        <taxon>Enterobacterales</taxon>
        <taxon>Enterobacteriaceae</taxon>
        <taxon>Escherichia</taxon>
    </lineage>
</organism>
<sequence>MKIAILSRDGTLYSCKRLREAAIQRGHLVEILDPLSCYMNINPAASSIHYKGRKLPHFDAVIPRIGTAITFYGTAALRQFEMLGSYPLNESVAIARARDKLRSMQLLARQGIDLPVTGIAHSPDDTSDLIDMVGGAPLVVKLVEGTQGIGVVLAETRQAAESVIDAFRGLNAHILVQEYIKEAQGCDIRCLVVGDEVVAAIERRAKEGDFRSNLHRGGAASVASITPQEREIAIKAARTMALDVAGVDILRANRGPLVMEVNASPGLEGIEKTTGIDIAGKMIRWIERHATTEYCLKTGG</sequence>
<name>RIMK_ECOSE</name>
<protein>
    <recommendedName>
        <fullName evidence="1">Ribosomal protein bS6--L-glutamate ligase</fullName>
        <ecNumber evidence="1">6.3.2.-</ecNumber>
    </recommendedName>
    <alternativeName>
        <fullName evidence="1">Poly-alpha-glutamate synthase</fullName>
    </alternativeName>
    <alternativeName>
        <fullName evidence="1">Ribosomal protein bS6 modification protein</fullName>
    </alternativeName>
</protein>
<dbReference type="EC" id="6.3.2.-" evidence="1"/>
<dbReference type="EMBL" id="AP009240">
    <property type="protein sequence ID" value="BAG76434.1"/>
    <property type="molecule type" value="Genomic_DNA"/>
</dbReference>
<dbReference type="RefSeq" id="WP_000684321.1">
    <property type="nucleotide sequence ID" value="NC_011415.1"/>
</dbReference>
<dbReference type="SMR" id="B6I8H3"/>
<dbReference type="GeneID" id="93776570"/>
<dbReference type="KEGG" id="ecy:ECSE_0910"/>
<dbReference type="HOGENOM" id="CLU_054353_0_1_6"/>
<dbReference type="Proteomes" id="UP000008199">
    <property type="component" value="Chromosome"/>
</dbReference>
<dbReference type="GO" id="GO:0005737">
    <property type="term" value="C:cytoplasm"/>
    <property type="evidence" value="ECO:0007669"/>
    <property type="project" value="TreeGrafter"/>
</dbReference>
<dbReference type="GO" id="GO:0005524">
    <property type="term" value="F:ATP binding"/>
    <property type="evidence" value="ECO:0007669"/>
    <property type="project" value="UniProtKB-UniRule"/>
</dbReference>
<dbReference type="GO" id="GO:0046872">
    <property type="term" value="F:metal ion binding"/>
    <property type="evidence" value="ECO:0007669"/>
    <property type="project" value="UniProtKB-KW"/>
</dbReference>
<dbReference type="GO" id="GO:0018169">
    <property type="term" value="F:ribosomal S6-glutamic acid ligase activity"/>
    <property type="evidence" value="ECO:0007669"/>
    <property type="project" value="UniProtKB-UniRule"/>
</dbReference>
<dbReference type="GO" id="GO:0036211">
    <property type="term" value="P:protein modification process"/>
    <property type="evidence" value="ECO:0007669"/>
    <property type="project" value="InterPro"/>
</dbReference>
<dbReference type="GO" id="GO:0009432">
    <property type="term" value="P:SOS response"/>
    <property type="evidence" value="ECO:0007669"/>
    <property type="project" value="TreeGrafter"/>
</dbReference>
<dbReference type="GO" id="GO:0006412">
    <property type="term" value="P:translation"/>
    <property type="evidence" value="ECO:0007669"/>
    <property type="project" value="UniProtKB-KW"/>
</dbReference>
<dbReference type="FunFam" id="3.40.50.20:FF:000004">
    <property type="entry name" value="Probable alpha-L-glutamate ligase"/>
    <property type="match status" value="1"/>
</dbReference>
<dbReference type="FunFam" id="3.30.1490.20:FF:000005">
    <property type="entry name" value="Probable alpha-L-glutamate ligase 1"/>
    <property type="match status" value="1"/>
</dbReference>
<dbReference type="FunFam" id="3.30.470.20:FF:000016">
    <property type="entry name" value="Ribosomal protein S6--L-glutamate ligase"/>
    <property type="match status" value="1"/>
</dbReference>
<dbReference type="Gene3D" id="3.40.50.20">
    <property type="match status" value="1"/>
</dbReference>
<dbReference type="Gene3D" id="3.30.1490.20">
    <property type="entry name" value="ATP-grasp fold, A domain"/>
    <property type="match status" value="1"/>
</dbReference>
<dbReference type="Gene3D" id="3.30.470.20">
    <property type="entry name" value="ATP-grasp fold, B domain"/>
    <property type="match status" value="1"/>
</dbReference>
<dbReference type="HAMAP" id="MF_01552">
    <property type="entry name" value="RimK"/>
    <property type="match status" value="1"/>
</dbReference>
<dbReference type="InterPro" id="IPR011761">
    <property type="entry name" value="ATP-grasp"/>
</dbReference>
<dbReference type="InterPro" id="IPR013651">
    <property type="entry name" value="ATP-grasp_RimK-type"/>
</dbReference>
<dbReference type="InterPro" id="IPR013815">
    <property type="entry name" value="ATP_grasp_subdomain_1"/>
</dbReference>
<dbReference type="InterPro" id="IPR023533">
    <property type="entry name" value="RimK"/>
</dbReference>
<dbReference type="InterPro" id="IPR041107">
    <property type="entry name" value="Rimk_N"/>
</dbReference>
<dbReference type="InterPro" id="IPR004666">
    <property type="entry name" value="Rp_bS6_RimK/Lys_biosynth_LsyX"/>
</dbReference>
<dbReference type="NCBIfam" id="NF007764">
    <property type="entry name" value="PRK10446.1"/>
    <property type="match status" value="1"/>
</dbReference>
<dbReference type="NCBIfam" id="TIGR00768">
    <property type="entry name" value="rimK_fam"/>
    <property type="match status" value="1"/>
</dbReference>
<dbReference type="PANTHER" id="PTHR21621:SF7">
    <property type="entry name" value="RIBOSOMAL PROTEIN BS6--L-GLUTAMATE LIGASE"/>
    <property type="match status" value="1"/>
</dbReference>
<dbReference type="PANTHER" id="PTHR21621">
    <property type="entry name" value="RIBOSOMAL PROTEIN S6 MODIFICATION PROTEIN"/>
    <property type="match status" value="1"/>
</dbReference>
<dbReference type="Pfam" id="PF08443">
    <property type="entry name" value="RimK"/>
    <property type="match status" value="1"/>
</dbReference>
<dbReference type="Pfam" id="PF18030">
    <property type="entry name" value="Rimk_N"/>
    <property type="match status" value="1"/>
</dbReference>
<dbReference type="SUPFAM" id="SSF56059">
    <property type="entry name" value="Glutathione synthetase ATP-binding domain-like"/>
    <property type="match status" value="1"/>
</dbReference>
<dbReference type="PROSITE" id="PS50975">
    <property type="entry name" value="ATP_GRASP"/>
    <property type="match status" value="1"/>
</dbReference>
<gene>
    <name evidence="1" type="primary">rimK</name>
    <name type="ordered locus">ECSE_0910</name>
</gene>
<evidence type="ECO:0000255" key="1">
    <source>
        <dbReference type="HAMAP-Rule" id="MF_01552"/>
    </source>
</evidence>
<reference key="1">
    <citation type="journal article" date="2008" name="DNA Res.">
        <title>Complete genome sequence and comparative analysis of the wild-type commensal Escherichia coli strain SE11 isolated from a healthy adult.</title>
        <authorList>
            <person name="Oshima K."/>
            <person name="Toh H."/>
            <person name="Ogura Y."/>
            <person name="Sasamoto H."/>
            <person name="Morita H."/>
            <person name="Park S.-H."/>
            <person name="Ooka T."/>
            <person name="Iyoda S."/>
            <person name="Taylor T.D."/>
            <person name="Hayashi T."/>
            <person name="Itoh K."/>
            <person name="Hattori M."/>
        </authorList>
    </citation>
    <scope>NUCLEOTIDE SEQUENCE [LARGE SCALE GENOMIC DNA]</scope>
    <source>
        <strain>SE11</strain>
    </source>
</reference>
<accession>B6I8H3</accession>
<proteinExistence type="inferred from homology"/>
<keyword id="KW-0067">ATP-binding</keyword>
<keyword id="KW-0436">Ligase</keyword>
<keyword id="KW-0460">Magnesium</keyword>
<keyword id="KW-0464">Manganese</keyword>
<keyword id="KW-0479">Metal-binding</keyword>
<keyword id="KW-0547">Nucleotide-binding</keyword>
<keyword id="KW-0648">Protein biosynthesis</keyword>
<comment type="function">
    <text evidence="1">An L-glutamate ligase that catalyzes the ATP-dependent post-translational addition of glutamate residues to the C-terminus of ribosomal protein bS6 (RpsF). Is also able to catalyze the synthesis of poly-alpha-glutamate in vitro, via ATP hydrolysis from unprotected glutamate as substrate. The number of glutamate residues added to either RpsF or to poly-alpha-glutamate changes with pH.</text>
</comment>
<comment type="cofactor">
    <cofactor evidence="1">
        <name>Mg(2+)</name>
        <dbReference type="ChEBI" id="CHEBI:18420"/>
    </cofactor>
    <cofactor evidence="1">
        <name>Mn(2+)</name>
        <dbReference type="ChEBI" id="CHEBI:29035"/>
    </cofactor>
    <text evidence="1">Binds 2 magnesium or manganese ions per subunit.</text>
</comment>
<comment type="similarity">
    <text evidence="1">Belongs to the RimK family.</text>
</comment>
<feature type="chain" id="PRO_1000194363" description="Ribosomal protein bS6--L-glutamate ligase">
    <location>
        <begin position="1"/>
        <end position="300"/>
    </location>
</feature>
<feature type="domain" description="ATP-grasp" evidence="1">
    <location>
        <begin position="104"/>
        <end position="287"/>
    </location>
</feature>
<feature type="binding site" evidence="1">
    <location>
        <position position="141"/>
    </location>
    <ligand>
        <name>ATP</name>
        <dbReference type="ChEBI" id="CHEBI:30616"/>
    </ligand>
</feature>
<feature type="binding site" evidence="1">
    <location>
        <begin position="178"/>
        <end position="179"/>
    </location>
    <ligand>
        <name>ATP</name>
        <dbReference type="ChEBI" id="CHEBI:30616"/>
    </ligand>
</feature>
<feature type="binding site" evidence="1">
    <location>
        <position position="187"/>
    </location>
    <ligand>
        <name>ATP</name>
        <dbReference type="ChEBI" id="CHEBI:30616"/>
    </ligand>
</feature>
<feature type="binding site" evidence="1">
    <location>
        <begin position="211"/>
        <end position="213"/>
    </location>
    <ligand>
        <name>ATP</name>
        <dbReference type="ChEBI" id="CHEBI:30616"/>
    </ligand>
</feature>
<feature type="binding site" evidence="1">
    <location>
        <position position="248"/>
    </location>
    <ligand>
        <name>Mg(2+)</name>
        <dbReference type="ChEBI" id="CHEBI:18420"/>
        <label>1</label>
    </ligand>
</feature>
<feature type="binding site" evidence="1">
    <location>
        <position position="248"/>
    </location>
    <ligand>
        <name>Mn(2+)</name>
        <dbReference type="ChEBI" id="CHEBI:29035"/>
        <label>1</label>
    </ligand>
</feature>
<feature type="binding site" evidence="1">
    <location>
        <position position="260"/>
    </location>
    <ligand>
        <name>Mg(2+)</name>
        <dbReference type="ChEBI" id="CHEBI:18420"/>
        <label>1</label>
    </ligand>
</feature>
<feature type="binding site" evidence="1">
    <location>
        <position position="260"/>
    </location>
    <ligand>
        <name>Mg(2+)</name>
        <dbReference type="ChEBI" id="CHEBI:18420"/>
        <label>2</label>
    </ligand>
</feature>
<feature type="binding site" evidence="1">
    <location>
        <position position="260"/>
    </location>
    <ligand>
        <name>Mn(2+)</name>
        <dbReference type="ChEBI" id="CHEBI:29035"/>
        <label>1</label>
    </ligand>
</feature>
<feature type="binding site" evidence="1">
    <location>
        <position position="260"/>
    </location>
    <ligand>
        <name>Mn(2+)</name>
        <dbReference type="ChEBI" id="CHEBI:29035"/>
        <label>2</label>
    </ligand>
</feature>
<feature type="binding site" evidence="1">
    <location>
        <position position="262"/>
    </location>
    <ligand>
        <name>Mg(2+)</name>
        <dbReference type="ChEBI" id="CHEBI:18420"/>
        <label>2</label>
    </ligand>
</feature>
<feature type="binding site" evidence="1">
    <location>
        <position position="262"/>
    </location>
    <ligand>
        <name>Mn(2+)</name>
        <dbReference type="ChEBI" id="CHEBI:29035"/>
        <label>2</label>
    </ligand>
</feature>